<sequence>MVENEKTSVEETEEKAETEDEMLTEDPSNEDSDEANEEGNELSEEEKRIAELEGQVDELNQRLLRIQADYDNFRRRQREEKEAAAKYRAQSLIEELLPALDNFERALLVEPEQEETKTLLKGMEMVYRQVSEALKKEGLEVIETKGETFDPHLHQAVMQVEDAEFESNEIVEELQKGYKLKDRVIRPSMVKVNA</sequence>
<dbReference type="EMBL" id="BA000004">
    <property type="protein sequence ID" value="BAB05064.1"/>
    <property type="molecule type" value="Genomic_DNA"/>
</dbReference>
<dbReference type="PIR" id="A83818">
    <property type="entry name" value="A83818"/>
</dbReference>
<dbReference type="RefSeq" id="WP_010897511.1">
    <property type="nucleotide sequence ID" value="NC_002570.2"/>
</dbReference>
<dbReference type="SMR" id="Q9KD73"/>
<dbReference type="STRING" id="272558.gene:10727239"/>
<dbReference type="GeneID" id="87596966"/>
<dbReference type="KEGG" id="bha:BH1345"/>
<dbReference type="eggNOG" id="COG0576">
    <property type="taxonomic scope" value="Bacteria"/>
</dbReference>
<dbReference type="HOGENOM" id="CLU_057217_5_2_9"/>
<dbReference type="OrthoDB" id="9812586at2"/>
<dbReference type="Proteomes" id="UP000001258">
    <property type="component" value="Chromosome"/>
</dbReference>
<dbReference type="GO" id="GO:0005737">
    <property type="term" value="C:cytoplasm"/>
    <property type="evidence" value="ECO:0007669"/>
    <property type="project" value="UniProtKB-SubCell"/>
</dbReference>
<dbReference type="GO" id="GO:0000774">
    <property type="term" value="F:adenyl-nucleotide exchange factor activity"/>
    <property type="evidence" value="ECO:0007669"/>
    <property type="project" value="InterPro"/>
</dbReference>
<dbReference type="GO" id="GO:0042803">
    <property type="term" value="F:protein homodimerization activity"/>
    <property type="evidence" value="ECO:0007669"/>
    <property type="project" value="InterPro"/>
</dbReference>
<dbReference type="GO" id="GO:0051087">
    <property type="term" value="F:protein-folding chaperone binding"/>
    <property type="evidence" value="ECO:0007669"/>
    <property type="project" value="InterPro"/>
</dbReference>
<dbReference type="GO" id="GO:0051082">
    <property type="term" value="F:unfolded protein binding"/>
    <property type="evidence" value="ECO:0007669"/>
    <property type="project" value="TreeGrafter"/>
</dbReference>
<dbReference type="GO" id="GO:0006457">
    <property type="term" value="P:protein folding"/>
    <property type="evidence" value="ECO:0007669"/>
    <property type="project" value="InterPro"/>
</dbReference>
<dbReference type="CDD" id="cd00446">
    <property type="entry name" value="GrpE"/>
    <property type="match status" value="1"/>
</dbReference>
<dbReference type="FunFam" id="2.30.22.10:FF:000001">
    <property type="entry name" value="Protein GrpE"/>
    <property type="match status" value="1"/>
</dbReference>
<dbReference type="Gene3D" id="3.90.20.20">
    <property type="match status" value="1"/>
</dbReference>
<dbReference type="Gene3D" id="2.30.22.10">
    <property type="entry name" value="Head domain of nucleotide exchange factor GrpE"/>
    <property type="match status" value="1"/>
</dbReference>
<dbReference type="HAMAP" id="MF_01151">
    <property type="entry name" value="GrpE"/>
    <property type="match status" value="1"/>
</dbReference>
<dbReference type="InterPro" id="IPR000740">
    <property type="entry name" value="GrpE"/>
</dbReference>
<dbReference type="InterPro" id="IPR013805">
    <property type="entry name" value="GrpE_coiled_coil"/>
</dbReference>
<dbReference type="InterPro" id="IPR009012">
    <property type="entry name" value="GrpE_head"/>
</dbReference>
<dbReference type="NCBIfam" id="NF010738">
    <property type="entry name" value="PRK14140.1"/>
    <property type="match status" value="1"/>
</dbReference>
<dbReference type="PANTHER" id="PTHR21237">
    <property type="entry name" value="GRPE PROTEIN"/>
    <property type="match status" value="1"/>
</dbReference>
<dbReference type="PANTHER" id="PTHR21237:SF23">
    <property type="entry name" value="GRPE PROTEIN HOMOLOG, MITOCHONDRIAL"/>
    <property type="match status" value="1"/>
</dbReference>
<dbReference type="Pfam" id="PF01025">
    <property type="entry name" value="GrpE"/>
    <property type="match status" value="1"/>
</dbReference>
<dbReference type="PRINTS" id="PR00773">
    <property type="entry name" value="GRPEPROTEIN"/>
</dbReference>
<dbReference type="SUPFAM" id="SSF58014">
    <property type="entry name" value="Coiled-coil domain of nucleotide exchange factor GrpE"/>
    <property type="match status" value="1"/>
</dbReference>
<dbReference type="SUPFAM" id="SSF51064">
    <property type="entry name" value="Head domain of nucleotide exchange factor GrpE"/>
    <property type="match status" value="1"/>
</dbReference>
<dbReference type="PROSITE" id="PS01071">
    <property type="entry name" value="GRPE"/>
    <property type="match status" value="1"/>
</dbReference>
<reference key="1">
    <citation type="journal article" date="2000" name="Nucleic Acids Res.">
        <title>Complete genome sequence of the alkaliphilic bacterium Bacillus halodurans and genomic sequence comparison with Bacillus subtilis.</title>
        <authorList>
            <person name="Takami H."/>
            <person name="Nakasone K."/>
            <person name="Takaki Y."/>
            <person name="Maeno G."/>
            <person name="Sasaki R."/>
            <person name="Masui N."/>
            <person name="Fuji F."/>
            <person name="Hirama C."/>
            <person name="Nakamura Y."/>
            <person name="Ogasawara N."/>
            <person name="Kuhara S."/>
            <person name="Horikoshi K."/>
        </authorList>
    </citation>
    <scope>NUCLEOTIDE SEQUENCE [LARGE SCALE GENOMIC DNA]</scope>
    <source>
        <strain>ATCC BAA-125 / DSM 18197 / FERM 7344 / JCM 9153 / C-125</strain>
    </source>
</reference>
<keyword id="KW-0143">Chaperone</keyword>
<keyword id="KW-0963">Cytoplasm</keyword>
<keyword id="KW-1185">Reference proteome</keyword>
<keyword id="KW-0346">Stress response</keyword>
<accession>Q9KD73</accession>
<organism>
    <name type="scientific">Halalkalibacterium halodurans (strain ATCC BAA-125 / DSM 18197 / FERM 7344 / JCM 9153 / C-125)</name>
    <name type="common">Bacillus halodurans</name>
    <dbReference type="NCBI Taxonomy" id="272558"/>
    <lineage>
        <taxon>Bacteria</taxon>
        <taxon>Bacillati</taxon>
        <taxon>Bacillota</taxon>
        <taxon>Bacilli</taxon>
        <taxon>Bacillales</taxon>
        <taxon>Bacillaceae</taxon>
        <taxon>Halalkalibacterium (ex Joshi et al. 2022)</taxon>
    </lineage>
</organism>
<proteinExistence type="inferred from homology"/>
<name>GRPE_HALH5</name>
<feature type="chain" id="PRO_0000113738" description="Protein GrpE">
    <location>
        <begin position="1"/>
        <end position="194"/>
    </location>
</feature>
<feature type="region of interest" description="Disordered" evidence="2">
    <location>
        <begin position="1"/>
        <end position="53"/>
    </location>
</feature>
<feature type="compositionally biased region" description="Acidic residues" evidence="2">
    <location>
        <begin position="10"/>
        <end position="44"/>
    </location>
</feature>
<evidence type="ECO:0000255" key="1">
    <source>
        <dbReference type="HAMAP-Rule" id="MF_01151"/>
    </source>
</evidence>
<evidence type="ECO:0000256" key="2">
    <source>
        <dbReference type="SAM" id="MobiDB-lite"/>
    </source>
</evidence>
<comment type="function">
    <text evidence="1">Participates actively in the response to hyperosmotic and heat shock by preventing the aggregation of stress-denatured proteins, in association with DnaK and GrpE. It is the nucleotide exchange factor for DnaK and may function as a thermosensor. Unfolded proteins bind initially to DnaJ; upon interaction with the DnaJ-bound protein, DnaK hydrolyzes its bound ATP, resulting in the formation of a stable complex. GrpE releases ADP from DnaK; ATP binding to DnaK triggers the release of the substrate protein, thus completing the reaction cycle. Several rounds of ATP-dependent interactions between DnaJ, DnaK and GrpE are required for fully efficient folding.</text>
</comment>
<comment type="subunit">
    <text evidence="1">Homodimer.</text>
</comment>
<comment type="subcellular location">
    <subcellularLocation>
        <location evidence="1">Cytoplasm</location>
    </subcellularLocation>
</comment>
<comment type="similarity">
    <text evidence="1">Belongs to the GrpE family.</text>
</comment>
<gene>
    <name evidence="1" type="primary">grpE</name>
    <name type="ordered locus">BH1345</name>
</gene>
<protein>
    <recommendedName>
        <fullName evidence="1">Protein GrpE</fullName>
    </recommendedName>
    <alternativeName>
        <fullName evidence="1">HSP-70 cofactor</fullName>
    </alternativeName>
</protein>